<protein>
    <recommendedName>
        <fullName evidence="29">11S globulin seed storage protein Ana o 2.0101</fullName>
    </recommendedName>
    <alternativeName>
        <fullName evidence="23 25 26 27">11S globulin Ana o 2</fullName>
    </alternativeName>
    <alternativeName>
        <fullName evidence="20 22 23 40">Allergen Ana o 2</fullName>
    </alternativeName>
    <alternativeName>
        <fullName evidence="22 23 24">Anacardein</fullName>
    </alternativeName>
    <alternativeName>
        <fullName evidence="22">Cashew major protein</fullName>
        <shortName evidence="22">CMP</shortName>
    </alternativeName>
    <alternativeName>
        <fullName evidence="21 23 28">Legumin Ana o 2</fullName>
    </alternativeName>
    <alternativeName>
        <fullName evidence="20">Legumin-like protein Ana o 2</fullName>
    </alternativeName>
    <allergenName evidence="29">Ana o 2.0101</allergenName>
    <component>
        <recommendedName>
            <fullName evidence="29">11S globulin seed storage protein Ana o 2.0101 acidic chain</fullName>
        </recommendedName>
        <alternativeName>
            <fullName evidence="29">11S globulin seed storage protein Ana o 2.0101 large subunit</fullName>
        </alternativeName>
    </component>
    <component>
        <recommendedName>
            <fullName evidence="29">11S globulin seed storage protein Ana o 2.0101 basic chain</fullName>
        </recommendedName>
        <alternativeName>
            <fullName evidence="29">11S globulin seed storage protein Ana o 2.0101 small subunit</fullName>
        </alternativeName>
    </component>
</protein>
<accession>Q8GZP6</accession>
<evidence type="ECO:0000250" key="1">
    <source>
        <dbReference type="UniProtKB" id="P04776"/>
    </source>
</evidence>
<evidence type="ECO:0000250" key="2">
    <source>
        <dbReference type="UniProtKB" id="Q2TPW5"/>
    </source>
</evidence>
<evidence type="ECO:0000255" key="3"/>
<evidence type="ECO:0000255" key="4">
    <source>
        <dbReference type="RuleBase" id="RU003681"/>
    </source>
</evidence>
<evidence type="ECO:0000256" key="5">
    <source>
        <dbReference type="SAM" id="MobiDB-lite"/>
    </source>
</evidence>
<evidence type="ECO:0000269" key="6">
    <source>
    </source>
</evidence>
<evidence type="ECO:0000269" key="7">
    <source>
    </source>
</evidence>
<evidence type="ECO:0000269" key="8">
    <source>
    </source>
</evidence>
<evidence type="ECO:0000269" key="9">
    <source>
    </source>
</evidence>
<evidence type="ECO:0000269" key="10">
    <source>
    </source>
</evidence>
<evidence type="ECO:0000269" key="11">
    <source>
    </source>
</evidence>
<evidence type="ECO:0000269" key="12">
    <source>
    </source>
</evidence>
<evidence type="ECO:0000269" key="13">
    <source>
    </source>
</evidence>
<evidence type="ECO:0000269" key="14">
    <source>
    </source>
</evidence>
<evidence type="ECO:0000269" key="15">
    <source>
    </source>
</evidence>
<evidence type="ECO:0000269" key="16">
    <source>
    </source>
</evidence>
<evidence type="ECO:0000269" key="17">
    <source>
    </source>
</evidence>
<evidence type="ECO:0000269" key="18">
    <source>
    </source>
</evidence>
<evidence type="ECO:0000269" key="19">
    <source>
    </source>
</evidence>
<evidence type="ECO:0000303" key="20">
    <source>
    </source>
</evidence>
<evidence type="ECO:0000303" key="21">
    <source>
    </source>
</evidence>
<evidence type="ECO:0000303" key="22">
    <source>
    </source>
</evidence>
<evidence type="ECO:0000303" key="23">
    <source>
    </source>
</evidence>
<evidence type="ECO:0000303" key="24">
    <source>
    </source>
</evidence>
<evidence type="ECO:0000303" key="25">
    <source>
    </source>
</evidence>
<evidence type="ECO:0000303" key="26">
    <source>
    </source>
</evidence>
<evidence type="ECO:0000303" key="27">
    <source>
    </source>
</evidence>
<evidence type="ECO:0000303" key="28">
    <source>
    </source>
</evidence>
<evidence type="ECO:0000305" key="29"/>
<evidence type="ECO:0000305" key="30">
    <source>
    </source>
</evidence>
<evidence type="ECO:0000305" key="31">
    <source>
    </source>
</evidence>
<evidence type="ECO:0000305" key="32">
    <source>
    </source>
</evidence>
<evidence type="ECO:0000305" key="33">
    <source>
    </source>
</evidence>
<evidence type="ECO:0000305" key="34">
    <source>
    </source>
</evidence>
<evidence type="ECO:0000305" key="35">
    <source>
    </source>
</evidence>
<evidence type="ECO:0000305" key="36">
    <source>
    </source>
</evidence>
<evidence type="ECO:0000305" key="37">
    <source>
    </source>
</evidence>
<evidence type="ECO:0000305" key="38">
    <source>
    </source>
</evidence>
<evidence type="ECO:0000305" key="39">
    <source>
    </source>
</evidence>
<evidence type="ECO:0000312" key="40">
    <source>
        <dbReference type="EMBL" id="AAN76862.1"/>
    </source>
</evidence>
<reference evidence="40" key="1">
    <citation type="journal article" date="2003" name="Int. Arch. Allergy Immunol.">
        <title>Ana o 2, a major cashew (Anacardium occidentale L.) nut allergen of the legumin family.</title>
        <authorList>
            <person name="Wang F."/>
            <person name="Robotham J.M."/>
            <person name="Teuber S.S."/>
            <person name="Sathe S.K."/>
            <person name="Roux K.H."/>
        </authorList>
    </citation>
    <scope>NUCLEOTIDE SEQUENCE [MRNA]</scope>
    <scope>TISSUE SPECIFICITY</scope>
    <scope>DEVELOPMENTAL STAGE</scope>
    <scope>ALLERGEN</scope>
    <scope>REGIONS</scope>
    <source>
        <tissue evidence="20">Seed</tissue>
    </source>
</reference>
<reference key="2">
    <citation type="journal article" date="2014" name="J. Agric. Food Chem.">
        <title>Decreased immunoglobulin E (IgE) binding to cashew allergens following sodium sulfite treatment and heating.</title>
        <authorList>
            <person name="Mattison C.P."/>
            <person name="Desormeaux W.A."/>
            <person name="Wasserman R.L."/>
            <person name="Yoshioka-Tarver M."/>
            <person name="Condon B."/>
            <person name="Grimm C.C."/>
        </authorList>
    </citation>
    <scope>PROTEIN SEQUENCE OF 16-58; 57-66; 65-113 AND 129-175</scope>
    <scope>IDENTIFICATION BY MASS SPECTROMETRY</scope>
    <scope>TISSUE SPECIFICITY</scope>
    <scope>PTM</scope>
    <scope>ALLERGEN</scope>
</reference>
<reference key="3">
    <citation type="journal article" date="2016" name="J. Agric. Food Chem.">
        <title>Purification and Characterization of Anacardium occidentale (Cashew) Allergens Ana o 1, Ana o 2, and Ana o 3.</title>
        <authorList>
            <person name="Reitsma M."/>
            <person name="Bastiaan-Net S."/>
            <person name="Sforza S."/>
            <person name="van der Valk J.P."/>
            <person name="van Gerth van Wijk R."/>
            <person name="Savelkoul H.F."/>
            <person name="de Jong N.W."/>
            <person name="Wichers H.J."/>
        </authorList>
    </citation>
    <scope>PROTEIN SEQUENCE OF 30-65; 113-125; 175-217; 184-217; 282-322; 302-314; 328-384; 348-360; 368-384; 387-429 AND 410-429</scope>
    <scope>IDENTIFICATION BY MASS SPECTROMETRY</scope>
    <scope>TISSUE SPECIFICITY</scope>
    <scope>PTM</scope>
    <scope>ALLERGEN</scope>
</reference>
<reference key="4">
    <citation type="journal article" date="2016" name="Toxicol. Rep.">
        <title>Heat-induced alterations in cashew allergen solubility and IgE binding.</title>
        <authorList>
            <person name="Mattison C.P."/>
            <person name="Bren-Mattison Y."/>
            <person name="Vant-Hull B."/>
            <person name="Vargas A.M."/>
            <person name="Wasserman R.L."/>
            <person name="Grimm C.C."/>
        </authorList>
    </citation>
    <scope>PROTEIN SEQUENCE OF 30-57; 39-57; 175-183; 198-217; 282-291; 292-301; 369-383 AND 390-396</scope>
    <scope>IDENTIFICATION BY MASS SPECTROMETRY</scope>
    <scope>TISSUE SPECIFICITY</scope>
</reference>
<reference key="5">
    <citation type="journal article" date="2011" name="J. Agric. Food Chem.">
        <title>Biochemical and spectroscopic characterization of almond and cashew nut seed 11S legumins, amandin and anacardein.</title>
        <authorList>
            <person name="Kshirsagar H.H."/>
            <person name="Fajer P."/>
            <person name="Sharma G.M."/>
            <person name="Roux K.H."/>
            <person name="Sathe S.K."/>
        </authorList>
    </citation>
    <scope>PROTEIN SEQUENCE OF 41-55</scope>
    <scope>TISSUE SPECIFICITY</scope>
    <scope>DEVELOPMENTAL STAGE</scope>
    <scope>ALLERGEN</scope>
    <scope>CIRCULAR DICHROISM ANALYSIS</scope>
</reference>
<reference key="6">
    <citation type="journal article" date="2008" name="J. Agric. Food Chem.">
        <title>Immunoglobulin E-reactive proteins in cashew (Anacardium occidentale) apple juice concentrate.</title>
        <authorList>
            <person name="Comstock S.S."/>
            <person name="Robotham J.M."/>
            <person name="Tawde P."/>
            <person name="Kshirsagar H."/>
            <person name="Sathe S.K."/>
            <person name="Roux K.H."/>
            <person name="Teuber S.S."/>
        </authorList>
    </citation>
    <scope>TISSUE SPECIFICITY</scope>
    <scope>DEVELOPMENTAL STAGE</scope>
    <scope>ALLERGEN</scope>
</reference>
<reference key="7">
    <citation type="journal article" date="2008" name="J. Agric. Food Chem.">
        <title>Effects of processing on immunoreactivity of cashew nut (Anacardium occidentale L.) seed flour proteins.</title>
        <authorList>
            <person name="Venkatachalam M."/>
            <person name="Monaghan E.K."/>
            <person name="Kshirsagar H.H."/>
            <person name="Robotham J.M."/>
            <person name="O'Donnell S.E."/>
            <person name="Gerber M.S."/>
            <person name="Roux K.H."/>
            <person name="Sathe S.K."/>
        </authorList>
    </citation>
    <scope>TISSUE SPECIFICITY</scope>
    <scope>ALLERGEN</scope>
    <scope>REGION</scope>
</reference>
<reference key="8">
    <citation type="journal article" date="2010" name="Mol. Immunol.">
        <title>Mapping of a conformational epitope on the cashew allergen Ana o 2: a discontinuous large subunit epitope dependent upon homologous or heterologous small subunit association.</title>
        <authorList>
            <person name="Xia L."/>
            <person name="Willison L.N."/>
            <person name="Porter L."/>
            <person name="Robotham J.M."/>
            <person name="Teuber S.S."/>
            <person name="Sathe S.K."/>
            <person name="Roux K.H."/>
        </authorList>
    </citation>
    <scope>SUBUNIT</scope>
    <scope>3D-STRUCTURE MODELING</scope>
    <scope>REGION</scope>
    <scope>SITE</scope>
    <scope>MUTAGENESIS OF GLU-34; ASP-36; ARG-38; VAL-39; GLU-40; GLU-42; ASP-50; ASN-52; HIS-53; GLU-54 AND ARG-57</scope>
</reference>
<reference key="9">
    <citation type="journal article" date="2010" name="Mol. Immunol.">
        <title>Characterization of a cashew allergen, 11S globulin (Ana o 2), conformational epitope.</title>
        <authorList>
            <person name="Robotham J.M."/>
            <person name="Xia L."/>
            <person name="Willison L.N."/>
            <person name="Teuber S.S."/>
            <person name="Sathe S.K."/>
            <person name="Roux K.H."/>
        </authorList>
    </citation>
    <scope>TISSUE SPECIFICITY</scope>
    <scope>PTM</scope>
    <scope>ALLERGEN</scope>
</reference>
<reference key="10">
    <citation type="journal article" date="2011" name="Anal. Chem.">
        <title>Epitope mapping of a 95 kDa antigen in complex with antibody by solution-phase amide backbone hydrogen/deuterium exchange monitored by Fourier transform ion cyclotron resonance mass spectrometry.</title>
        <authorList>
            <person name="Zhang Q."/>
            <person name="Willison L.N."/>
            <person name="Tripathi P."/>
            <person name="Sathe S.K."/>
            <person name="Roux K.H."/>
            <person name="Emmett M.R."/>
            <person name="Blakney G.T."/>
            <person name="Zhang H.M."/>
            <person name="Marshall A.G."/>
        </authorList>
    </citation>
    <scope>SUBUNIT</scope>
    <scope>3D-STRUCTURE MODELING</scope>
    <scope>REGIONS</scope>
</reference>
<reference key="11">
    <citation type="journal article" date="2013" name="J. Am. Soc. Mass Spectrom.">
        <title>Rapid screening for potential epitopes reactive with a polycolonal antibody by solution-phase H/D exchange monitored by FT-ICR mass spectrometry.</title>
        <authorList>
            <person name="Zhang Q."/>
            <person name="Noble K.A."/>
            <person name="Mao Y."/>
            <person name="Young N.L."/>
            <person name="Sathe S.K."/>
            <person name="Roux K.H."/>
            <person name="Marshall A.G."/>
        </authorList>
    </citation>
    <scope>3D-STRUCTURE MODELING</scope>
    <scope>REGIONS</scope>
</reference>
<reference key="12">
    <citation type="journal article" date="2015" name="Food Chem.">
        <title>Treatment with oleic acid reduces IgE binding to peanut and cashew allergens.</title>
        <authorList>
            <person name="Chung S.Y."/>
            <person name="Mattison C.P."/>
            <person name="Reed S."/>
            <person name="Wasserman R.L."/>
            <person name="Desormeaux W.A."/>
        </authorList>
    </citation>
    <scope>TISSUE SPECIFICITY</scope>
    <scope>ALLERGEN</scope>
</reference>
<reference key="13">
    <citation type="journal article" date="2016" name="Clin. Exp. Allergy">
        <title>Ana o 1 and Ana o 2 cashew allergens share cross-reactive CD4(+) T cell epitopes with other tree nuts.</title>
        <authorList>
            <person name="Archila L.D."/>
            <person name="Chow I.T."/>
            <person name="McGinty J.W."/>
            <person name="Renand A."/>
            <person name="Jeong D."/>
            <person name="Robinson D."/>
            <person name="Farrington M.L."/>
            <person name="Kwok W.W."/>
        </authorList>
    </citation>
    <scope>ALLERGEN</scope>
    <scope>REGIONS</scope>
</reference>
<reference key="14">
    <citation type="journal article" date="2017" name="Clin. Exp. Allergy">
        <title>sIgE Ana o 1, 2 and 3 accurately distinguish tolerant from allergic children sensitized to cashew nuts.</title>
        <authorList>
            <person name="van der Valk J.P."/>
            <person name="Gerth van Wijk R."/>
            <person name="Vergouwe Y."/>
            <person name="Steyerberg E.W."/>
            <person name="Reitsma M."/>
            <person name="Wichers H.J."/>
            <person name="Savelkoul H.F."/>
            <person name="Vlieg-Boerstra B."/>
            <person name="de Groot H."/>
            <person name="Dubois A.E."/>
            <person name="de Jong N.W."/>
        </authorList>
    </citation>
    <scope>TISSUE SPECIFICITY</scope>
    <scope>ALLERGEN</scope>
    <scope>BIOTECHNOLOGY</scope>
</reference>
<proteinExistence type="evidence at protein level"/>
<organism evidence="40">
    <name type="scientific">Anacardium occidentale</name>
    <name type="common">Cashew</name>
    <dbReference type="NCBI Taxonomy" id="171929"/>
    <lineage>
        <taxon>Eukaryota</taxon>
        <taxon>Viridiplantae</taxon>
        <taxon>Streptophyta</taxon>
        <taxon>Embryophyta</taxon>
        <taxon>Tracheophyta</taxon>
        <taxon>Spermatophyta</taxon>
        <taxon>Magnoliopsida</taxon>
        <taxon>eudicotyledons</taxon>
        <taxon>Gunneridae</taxon>
        <taxon>Pentapetalae</taxon>
        <taxon>rosids</taxon>
        <taxon>malvids</taxon>
        <taxon>Sapindales</taxon>
        <taxon>Anacardiaceae</taxon>
        <taxon>Anacardium</taxon>
    </lineage>
</organism>
<comment type="function">
    <text evidence="4 30 31 32 33 34 35 36 37 38 39">Seed storage protein.</text>
</comment>
<comment type="subunit">
    <text evidence="1 10 12">Homotrimer (PubMed:21861454). Hexamer (PubMed:20362338). Each subunit is composed of an acidic and a basic chain derived from a single precursor and linked by a disulfide bond (By similarity).</text>
</comment>
<comment type="tissue specificity">
    <text evidence="6 7 8 9 11 14 15 16 18 19">Expressed in seed (at protein level) (PubMed:14555856, PubMed:18558706, PubMed:18795784, PubMed:20362336, PubMed:21138244, PubMed:24926808, PubMed:25766831, PubMed:26769082, PubMed:27513566, PubMed:28959544). Expressed in the juice of the cashew apple (at protein level) (PubMed:18558706).</text>
</comment>
<comment type="developmental stage">
    <text evidence="6 7 11">Expressed during seed maturation (PubMed:14555856). Expressed in mature raw cashew nut (PubMed:18558706, PubMed:21138244).</text>
</comment>
<comment type="PTM">
    <text evidence="9 14 16 30">Proteolytically processed from a single precursor to produce an acidic and a basic chain that are linked by a disulfide bond (PubMed:14555856, PubMed:20362336, PubMed:24926808, PubMed:26769082). Not glycosylated (PubMed:26769082).</text>
</comment>
<comment type="allergen">
    <text evidence="6 7 8 9 11 14 15 16 17 18">Causes an allergic reaction in human (PubMed:14555856, PubMed:18558706, PubMed:20362336, PubMed:24926808, PubMed:25766831, PubMed:26769082, PubMed:27129138, PubMed:27513566). Binds to IgE of patients allergic to cashew nuts (PubMed:14555856, PubMed:18558706, PubMed:20362336, PubMed:24926808, PubMed:25766831, PubMed:26769082, PubMed:27513566). Recombinant protein binds to IgE in 62% of the 21 patients tested (PubMed:14555856). Reduced IgE-binding following 50 mM sodium sulfite treatment at 100 degrees Celsius or by 5 mM dithiothreitol (DTT) (PubMed:24926808). IgE-binding is reduced by 35% with 5 mM sodium oleate treatment at 70 degrees Celsius for 60 min only if followed by an additional overnight incubation at 37 degrees Celsius (PubMed:25766831). Allergenicity is removed from the cashew apple juice concentrate by 5 kDa filtration (PubMed:18558706). Retains immunoreactivity for mouse monoclonal antibodies (mAbs) 4C3 and 4H9 after a variety of processing treatments including autoclaving, blanching, microwave heating, dry roasting, gamma-irradiation and pH (PubMed:18795784). Significantly reduced immunoreactivity for mouse mAb 4C3 by 2.5 mM sodium dodecyl sulfate (SDS) or 2% v/v reducing agent beta-mercaptoethanol (beta-ME) with heat (100 degrees Celsius for 10 min) treatments (PubMed:21138244). Exposure to extreme pH (1 or 13) and extreme heat treatments (autoclaving for 30 min or roasting at 200 degrees Celsius for 15 min) results in almost complete loss of binding to mouse mAb 4C3 (PubMed:18795784). Mouse mAb 2B5 recognizes a conformational epitope on the acidic chain of this protein, the recognition of which requires the association of the basic chain, but is independent of their post-translational cleavage. The antibody competes with patient IgE for binding to the epitope. The epitope is destroyed by physical (boiling) and chemical (0.5 M beta-ME, 10% SDS and 6 M urea) denturation (PubMed:20362336). Cashew allergic patients elicit responses to this protein by CD4(+) T cells with T-helper 2 (Th2) and Th2/T-helper 17 (Th17) phenotypes (PubMed:27129138).</text>
</comment>
<comment type="biotechnology">
    <text evidence="18">Can be used as part of the diagnostics for predicting the risk for positive double-blind, placebo-controlled food challenge test (DBPCFC) in cashew-allergic children. The risk increases with higher specific IgE levels to this protein.</text>
</comment>
<comment type="similarity">
    <text evidence="4 29">Belongs to the 11S seed storage protein (globulins) family.</text>
</comment>
<name>ANAO2_ANAOC</name>
<dbReference type="EMBL" id="AF453947">
    <property type="protein sequence ID" value="AAN76862.1"/>
    <property type="molecule type" value="mRNA"/>
</dbReference>
<dbReference type="SMR" id="Q8GZP6"/>
<dbReference type="Allergome" id="3077">
    <property type="allergen name" value="Ana o 2.0101"/>
</dbReference>
<dbReference type="Allergome" id="976">
    <property type="allergen name" value="Ana o 2"/>
</dbReference>
<dbReference type="GO" id="GO:0019863">
    <property type="term" value="F:IgE binding"/>
    <property type="evidence" value="ECO:0007669"/>
    <property type="project" value="UniProtKB-KW"/>
</dbReference>
<dbReference type="GO" id="GO:0019864">
    <property type="term" value="F:IgG binding"/>
    <property type="evidence" value="ECO:0007669"/>
    <property type="project" value="UniProtKB-KW"/>
</dbReference>
<dbReference type="GO" id="GO:0045735">
    <property type="term" value="F:nutrient reservoir activity"/>
    <property type="evidence" value="ECO:0000305"/>
    <property type="project" value="UniProtKB"/>
</dbReference>
<dbReference type="GO" id="GO:0070207">
    <property type="term" value="P:protein homotrimerization"/>
    <property type="evidence" value="ECO:0000314"/>
    <property type="project" value="UniProtKB"/>
</dbReference>
<dbReference type="GO" id="GO:0010431">
    <property type="term" value="P:seed maturation"/>
    <property type="evidence" value="ECO:0000270"/>
    <property type="project" value="UniProtKB"/>
</dbReference>
<dbReference type="CDD" id="cd02243">
    <property type="entry name" value="cupin_11S_legumin_C"/>
    <property type="match status" value="1"/>
</dbReference>
<dbReference type="CDD" id="cd02242">
    <property type="entry name" value="cupin_11S_legumin_N"/>
    <property type="match status" value="1"/>
</dbReference>
<dbReference type="FunFam" id="2.60.120.10:FF:000073">
    <property type="entry name" value="Glycinin G1"/>
    <property type="match status" value="1"/>
</dbReference>
<dbReference type="Gene3D" id="2.60.120.10">
    <property type="entry name" value="Jelly Rolls"/>
    <property type="match status" value="2"/>
</dbReference>
<dbReference type="InterPro" id="IPR022379">
    <property type="entry name" value="11S_seedstore_CS"/>
</dbReference>
<dbReference type="InterPro" id="IPR006044">
    <property type="entry name" value="11S_seedstore_pln"/>
</dbReference>
<dbReference type="InterPro" id="IPR006045">
    <property type="entry name" value="Cupin_1"/>
</dbReference>
<dbReference type="InterPro" id="IPR014710">
    <property type="entry name" value="RmlC-like_jellyroll"/>
</dbReference>
<dbReference type="InterPro" id="IPR011051">
    <property type="entry name" value="RmlC_Cupin_sf"/>
</dbReference>
<dbReference type="InterPro" id="IPR050253">
    <property type="entry name" value="Seed_Storage-Functional"/>
</dbReference>
<dbReference type="PANTHER" id="PTHR31189:SF35">
    <property type="entry name" value="12S SEED STORAGE PROTEIN CRB"/>
    <property type="match status" value="1"/>
</dbReference>
<dbReference type="PANTHER" id="PTHR31189">
    <property type="entry name" value="OS03G0336100 PROTEIN-RELATED"/>
    <property type="match status" value="1"/>
</dbReference>
<dbReference type="Pfam" id="PF00190">
    <property type="entry name" value="Cupin_1"/>
    <property type="match status" value="2"/>
</dbReference>
<dbReference type="PRINTS" id="PR00439">
    <property type="entry name" value="11SGLOBULIN"/>
</dbReference>
<dbReference type="SMART" id="SM00835">
    <property type="entry name" value="Cupin_1"/>
    <property type="match status" value="2"/>
</dbReference>
<dbReference type="SUPFAM" id="SSF51182">
    <property type="entry name" value="RmlC-like cupins"/>
    <property type="match status" value="1"/>
</dbReference>
<dbReference type="PROSITE" id="PS00305">
    <property type="entry name" value="11S_SEED_STORAGE"/>
    <property type="match status" value="1"/>
</dbReference>
<feature type="signal peptide" evidence="3">
    <location>
        <begin position="1" status="less than"/>
        <end position="14"/>
    </location>
</feature>
<feature type="chain" id="PRO_0000448659" description="11S globulin seed storage protein Ana o 2.0101 acidic chain" evidence="3 30 33">
    <location>
        <begin position="15"/>
        <end position="271"/>
    </location>
</feature>
<feature type="chain" id="PRO_0000448660" description="11S globulin seed storage protein Ana o 2.0101 basic chain" evidence="30 33">
    <location>
        <begin position="272"/>
        <end position="457"/>
    </location>
</feature>
<feature type="domain" description="Cupin type-1 1" evidence="3">
    <location>
        <begin position="30"/>
        <end position="220"/>
    </location>
</feature>
<feature type="domain" description="Cupin type-1 2" evidence="3">
    <location>
        <begin position="284"/>
        <end position="433"/>
    </location>
</feature>
<feature type="region of interest" description="IgE-binding" evidence="6">
    <location>
        <begin position="15"/>
        <end position="29"/>
    </location>
</feature>
<feature type="region of interest" description="Conformational epitope; mouse monoclonal antibody (mAb) 2B5-binding" evidence="12">
    <location>
        <begin position="29"/>
        <end position="37"/>
    </location>
</feature>
<feature type="region of interest" description="Conformational epitope; mouse monoclonal antibody (mAb) 2B5-binding" evidence="12">
    <location>
        <begin position="31"/>
        <end position="48"/>
    </location>
</feature>
<feature type="region of interest" description="Binds goat polyclonal antibodies (pAbs)" evidence="13">
    <location>
        <begin position="32"/>
        <end position="45"/>
    </location>
</feature>
<feature type="region of interest" description="Mouse monoclonal antibody (mAb) 2B5-binding" evidence="10">
    <location>
        <begin position="34"/>
        <end position="57"/>
    </location>
</feature>
<feature type="region of interest" description="Mouse monoclonal antibody (mAb) 4H9-binding" evidence="8">
    <location>
        <begin position="41"/>
        <end position="55"/>
    </location>
</feature>
<feature type="region of interest" description="Binds goat polyclonal antibodies (pAbs)" evidence="13">
    <location>
        <begin position="55"/>
        <end position="86"/>
    </location>
</feature>
<feature type="region of interest" description="IgE-binding" evidence="6">
    <location>
        <begin position="105"/>
        <end position="119"/>
    </location>
</feature>
<feature type="region of interest" description="Binds goat polyclonal antibodies (pAbs)" evidence="13">
    <location>
        <begin position="215"/>
        <end position="239"/>
    </location>
</feature>
<feature type="region of interest" description="CD4(+) T cell-reactive epitope" evidence="17">
    <location>
        <begin position="233"/>
        <end position="252"/>
    </location>
</feature>
<feature type="region of interest" description="Disordered" evidence="5">
    <location>
        <begin position="243"/>
        <end position="270"/>
    </location>
</feature>
<feature type="region of interest" description="Linear epitope; mouse monoclonal antibody (mAb) 1F5-binding" evidence="12">
    <location>
        <begin position="265"/>
        <end position="289"/>
    </location>
</feature>
<feature type="region of interest" description="CD4(+) T cell-reactive epitope" evidence="17">
    <location>
        <begin position="289"/>
        <end position="308"/>
    </location>
</feature>
<feature type="region of interest" description="CD4(+) T cell-reactive epitope" evidence="17">
    <location>
        <begin position="297"/>
        <end position="316"/>
    </location>
</feature>
<feature type="region of interest" description="CD4(+) T cell-reactive epitope" evidence="17">
    <location>
        <begin position="321"/>
        <end position="340"/>
    </location>
</feature>
<feature type="region of interest" description="CD4(+) T cell-reactive epitope" evidence="17">
    <location>
        <begin position="329"/>
        <end position="348"/>
    </location>
</feature>
<feature type="region of interest" description="CD4(+) T cell-reactive epitope" evidence="17">
    <location>
        <begin position="377"/>
        <end position="396"/>
    </location>
</feature>
<feature type="region of interest" description="Binds goat polyclonal antibodies (pAbs), but buried in the 3D-structure model" evidence="13">
    <location>
        <begin position="395"/>
        <end position="416"/>
    </location>
</feature>
<feature type="short sequence motif" description="NGXEET; peptidase recognition motif" evidence="2">
    <location>
        <begin position="271"/>
        <end position="276"/>
    </location>
</feature>
<feature type="compositionally biased region" description="Basic and acidic residues" evidence="5">
    <location>
        <begin position="261"/>
        <end position="270"/>
    </location>
</feature>
<feature type="site" description="Critical for epitope recognition by the mouse monoclonal antibody (mAb) 2B5" evidence="10">
    <location>
        <position position="34"/>
    </location>
</feature>
<feature type="disulfide bond" evidence="1">
    <location>
        <begin position="25"/>
        <end position="58"/>
    </location>
</feature>
<feature type="disulfide bond" description="Interchain (between acidic and basic chains)" evidence="1">
    <location>
        <begin position="101"/>
        <end position="278"/>
    </location>
</feature>
<feature type="mutagenesis site" description="Significantly reduced binding to mouse monoclonal antibody (mAb) 2B5." evidence="10">
    <original>E</original>
    <variation>A</variation>
    <location>
        <position position="34"/>
    </location>
</feature>
<feature type="mutagenesis site" description="Loss of binding to mouse monoclonal antibody (mAb) 2B5." evidence="10">
    <original>D</original>
    <variation>A</variation>
    <location>
        <position position="36"/>
    </location>
</feature>
<feature type="mutagenesis site" description="Loss of binding to mouse monoclonal antibody (mAb) 2B5." evidence="10">
    <original>R</original>
    <variation>A</variation>
    <location>
        <position position="38"/>
    </location>
</feature>
<feature type="mutagenesis site" description="Significantly reduced binding to mouse monoclonal antibody (mAb) 2B5." evidence="10">
    <original>V</original>
    <variation>A</variation>
    <location>
        <position position="39"/>
    </location>
</feature>
<feature type="mutagenesis site" description="Significantly reduced binding to mouse monoclonal antibody (mAb) 2B5." evidence="10">
    <original>E</original>
    <variation>A</variation>
    <location>
        <position position="40"/>
    </location>
</feature>
<feature type="mutagenesis site" description="Significantly reduced binding to mouse monoclonal antibody (mAb) 2B5." evidence="10">
    <original>E</original>
    <variation>A</variation>
    <location>
        <position position="42"/>
    </location>
</feature>
<feature type="mutagenesis site" description="Loss of binding to mouse monoclonal antibody (mAb) 2B5." evidence="10">
    <original>D</original>
    <variation>A</variation>
    <location>
        <position position="50"/>
    </location>
</feature>
<feature type="mutagenesis site" description="No effect in binding to mouse monoclonal antibody (mAb) 2B5." evidence="10">
    <original>N</original>
    <variation>A</variation>
    <location>
        <position position="52"/>
    </location>
</feature>
<feature type="mutagenesis site" description="Significantly reduced binding to mouse monoclonal antibody (mAb) 2B5." evidence="10">
    <original>H</original>
    <variation>A</variation>
    <location>
        <position position="53"/>
    </location>
</feature>
<feature type="mutagenesis site" description="No effect in binding to mouse monoclonal antibody (mAb) 2B5." evidence="10">
    <original>E</original>
    <variation>A</variation>
    <location>
        <position position="54"/>
    </location>
</feature>
<feature type="mutagenesis site" description="Significantly reduced binding to mouse monoclonal antibody (mAb) 2B5." evidence="10">
    <original>R</original>
    <variation>A</variation>
    <location>
        <position position="57"/>
    </location>
</feature>
<feature type="non-terminal residue" evidence="40">
    <location>
        <position position="1"/>
    </location>
</feature>
<sequence length="457" mass="51996">LSVCFLILFHGCLASRQEWQQQDECQIDRLDALEPDNRVEYEAGTVEAWDPNHEQFRCAGVALVRHTIQPNGLLLPQYSNAPQLIYVVQGEGMTGISYPGCPETYQAPQQGRQQGQSGRFQDRHQKIRRFRRGDIIAIPAGVAHWCYNEGNSPVVTVTLLDVSNSQNQLDRTPRKFHLAGNPKDVFQQQQQHQSRGRNLFSGFDTELLAEAFQVDERLIKQLKSEDNRGGIVKVKDDELRVIRPSRSQSERGSESEEESEDEKRRWGQRDNGIEETICTMRLKENINDPARADIYTPEVGRLTTLNSLNLPILKWLQLSVEKGVLYKNALVLPHWNLNSHSIIYGCKGKGQVQVVDNFGNRVFDGEVREGQMLVVPQNFAVVKRAREERFEWISFKTNDRAMTSPLAGRTSVLGGMPEEVLANAFQISREDARKIKFNNQQTTLTSGESSHHMRDDA</sequence>
<keyword id="KW-0020">Allergen</keyword>
<keyword id="KW-0903">Direct protein sequencing</keyword>
<keyword id="KW-1015">Disulfide bond</keyword>
<keyword id="KW-0389">IgE-binding protein</keyword>
<keyword id="KW-0390">IgG-binding protein</keyword>
<keyword id="KW-0708">Seed storage protein</keyword>
<keyword id="KW-0732">Signal</keyword>
<keyword id="KW-0758">Storage protein</keyword>